<sequence>MSGGLDILSLKEDDITKMLVATTHLGSENVNFQMEQYVYKRRADGVNIINLGKTWEKLQLAARAIVAIENASDVFVISSRPIGQRAVLKFAKYTDTTPIAGRFTPGAFTNQIQPAFREPRLLVVTDPMTDHQPIMEASYVNIPVIAFTNTDSPLRYIDIAIPCNNKSAHSIGLMWWLLAREVLRLRGTISRTVEWPVVVDLYFYRDPEEAEKEEAAAKELLPPPKIEEVVDHPVEETTNWADEVAAETVGGVEDWNEDTVKTSWGSDGQF</sequence>
<name>RSSA_DROPS</name>
<feature type="initiator methionine" description="Removed" evidence="1">
    <location>
        <position position="1"/>
    </location>
</feature>
<feature type="chain" id="PRO_0000371585" description="Small ribosomal subunit protein uS2">
    <location>
        <begin position="2"/>
        <end position="270"/>
    </location>
</feature>
<protein>
    <recommendedName>
        <fullName evidence="1">Small ribosomal subunit protein uS2</fullName>
    </recommendedName>
    <alternativeName>
        <fullName evidence="2">40S ribosomal protein SA</fullName>
    </alternativeName>
    <alternativeName>
        <fullName evidence="1">Protein stubarista</fullName>
    </alternativeName>
</protein>
<reference key="1">
    <citation type="journal article" date="2005" name="Genome Res.">
        <title>Comparative genome sequencing of Drosophila pseudoobscura: chromosomal, gene, and cis-element evolution.</title>
        <authorList>
            <person name="Richards S."/>
            <person name="Liu Y."/>
            <person name="Bettencourt B.R."/>
            <person name="Hradecky P."/>
            <person name="Letovsky S."/>
            <person name="Nielsen R."/>
            <person name="Thornton K."/>
            <person name="Hubisz M.J."/>
            <person name="Chen R."/>
            <person name="Meisel R.P."/>
            <person name="Couronne O."/>
            <person name="Hua S."/>
            <person name="Smith M.A."/>
            <person name="Zhang P."/>
            <person name="Liu J."/>
            <person name="Bussemaker H.J."/>
            <person name="van Batenburg M.F."/>
            <person name="Howells S.L."/>
            <person name="Scherer S.E."/>
            <person name="Sodergren E."/>
            <person name="Matthews B.B."/>
            <person name="Crosby M.A."/>
            <person name="Schroeder A.J."/>
            <person name="Ortiz-Barrientos D."/>
            <person name="Rives C.M."/>
            <person name="Metzker M.L."/>
            <person name="Muzny D.M."/>
            <person name="Scott G."/>
            <person name="Steffen D."/>
            <person name="Wheeler D.A."/>
            <person name="Worley K.C."/>
            <person name="Havlak P."/>
            <person name="Durbin K.J."/>
            <person name="Egan A."/>
            <person name="Gill R."/>
            <person name="Hume J."/>
            <person name="Morgan M.B."/>
            <person name="Miner G."/>
            <person name="Hamilton C."/>
            <person name="Huang Y."/>
            <person name="Waldron L."/>
            <person name="Verduzco D."/>
            <person name="Clerc-Blankenburg K.P."/>
            <person name="Dubchak I."/>
            <person name="Noor M.A.F."/>
            <person name="Anderson W."/>
            <person name="White K.P."/>
            <person name="Clark A.G."/>
            <person name="Schaeffer S.W."/>
            <person name="Gelbart W.M."/>
            <person name="Weinstock G.M."/>
            <person name="Gibbs R.A."/>
        </authorList>
    </citation>
    <scope>NUCLEOTIDE SEQUENCE [LARGE SCALE GENOMIC DNA]</scope>
    <source>
        <strain>MV2-25 / Tucson 14011-0121.94</strain>
    </source>
</reference>
<keyword id="KW-0963">Cytoplasm</keyword>
<keyword id="KW-0217">Developmental protein</keyword>
<keyword id="KW-0539">Nucleus</keyword>
<keyword id="KW-1185">Reference proteome</keyword>
<keyword id="KW-0687">Ribonucleoprotein</keyword>
<keyword id="KW-0689">Ribosomal protein</keyword>
<evidence type="ECO:0000255" key="1">
    <source>
        <dbReference type="HAMAP-Rule" id="MF_03015"/>
    </source>
</evidence>
<evidence type="ECO:0000305" key="2"/>
<comment type="function">
    <text evidence="1">Required for the assembly and/or stability of the 40S ribosomal subunit. Required for the processing of the 20S rRNA-precursor to mature 18S rRNA in a late step of the maturation of 40S ribosomal subunits. Required during oogenesis and imaginal development.</text>
</comment>
<comment type="subunit">
    <text evidence="1">Component of the small ribosomal subunit. Mature ribosomes consist of a small (40S) and a large (60S) subunit. The 40S subunit contains about 33 different proteins and 1 molecule of RNA (18S). The 60S subunit contains about 49 different proteins and 3 molecules of RNA (28S, 5.8S and 5S). Interacts with oho23B/rpS21.</text>
</comment>
<comment type="subcellular location">
    <subcellularLocation>
        <location evidence="1">Cytoplasm</location>
    </subcellularLocation>
    <subcellularLocation>
        <location evidence="1">Nucleus</location>
    </subcellularLocation>
    <text evidence="1">May associate with nascent RNP complexes within the nucleus.</text>
</comment>
<comment type="similarity">
    <text evidence="1">Belongs to the universal ribosomal protein uS2 family.</text>
</comment>
<gene>
    <name evidence="1" type="primary">sta</name>
    <name type="ORF">GA13249</name>
</gene>
<accession>Q29J14</accession>
<proteinExistence type="inferred from homology"/>
<dbReference type="EMBL" id="CH379063">
    <property type="protein sequence ID" value="EAL32488.2"/>
    <property type="molecule type" value="Genomic_DNA"/>
</dbReference>
<dbReference type="SMR" id="Q29J14"/>
<dbReference type="FunCoup" id="Q29J14">
    <property type="interactions" value="1331"/>
</dbReference>
<dbReference type="STRING" id="46245.Q29J14"/>
<dbReference type="eggNOG" id="KOG0830">
    <property type="taxonomic scope" value="Eukaryota"/>
</dbReference>
<dbReference type="HOGENOM" id="CLU_058171_1_0_1"/>
<dbReference type="InParanoid" id="Q29J14"/>
<dbReference type="OMA" id="VKNFFEP"/>
<dbReference type="ChiTaRS" id="sta">
    <property type="organism name" value="fly"/>
</dbReference>
<dbReference type="Proteomes" id="UP000001819">
    <property type="component" value="Unplaced"/>
</dbReference>
<dbReference type="GO" id="GO:0022627">
    <property type="term" value="C:cytosolic small ribosomal subunit"/>
    <property type="evidence" value="ECO:0007669"/>
    <property type="project" value="UniProtKB-UniRule"/>
</dbReference>
<dbReference type="GO" id="GO:0005634">
    <property type="term" value="C:nucleus"/>
    <property type="evidence" value="ECO:0007669"/>
    <property type="project" value="UniProtKB-SubCell"/>
</dbReference>
<dbReference type="GO" id="GO:0003735">
    <property type="term" value="F:structural constituent of ribosome"/>
    <property type="evidence" value="ECO:0007669"/>
    <property type="project" value="UniProtKB-UniRule"/>
</dbReference>
<dbReference type="GO" id="GO:0000028">
    <property type="term" value="P:ribosomal small subunit assembly"/>
    <property type="evidence" value="ECO:0007669"/>
    <property type="project" value="UniProtKB-UniRule"/>
</dbReference>
<dbReference type="GO" id="GO:0006412">
    <property type="term" value="P:translation"/>
    <property type="evidence" value="ECO:0007669"/>
    <property type="project" value="UniProtKB-UniRule"/>
</dbReference>
<dbReference type="CDD" id="cd01425">
    <property type="entry name" value="RPS2"/>
    <property type="match status" value="1"/>
</dbReference>
<dbReference type="FunFam" id="3.40.50.10490:FF:000012">
    <property type="entry name" value="40S ribosomal protein SA"/>
    <property type="match status" value="1"/>
</dbReference>
<dbReference type="Gene3D" id="3.40.50.10490">
    <property type="entry name" value="Glucose-6-phosphate isomerase like protein, domain 1"/>
    <property type="match status" value="1"/>
</dbReference>
<dbReference type="HAMAP" id="MF_03015">
    <property type="entry name" value="Ribosomal_S2_euk"/>
    <property type="match status" value="1"/>
</dbReference>
<dbReference type="InterPro" id="IPR001865">
    <property type="entry name" value="Ribosomal_uS2"/>
</dbReference>
<dbReference type="InterPro" id="IPR032281">
    <property type="entry name" value="Ribosomal_uS2_C"/>
</dbReference>
<dbReference type="InterPro" id="IPR018130">
    <property type="entry name" value="Ribosomal_uS2_CS"/>
</dbReference>
<dbReference type="InterPro" id="IPR027498">
    <property type="entry name" value="Ribosomal_uS2_euk"/>
</dbReference>
<dbReference type="InterPro" id="IPR005707">
    <property type="entry name" value="Ribosomal_uS2_euk/arc"/>
</dbReference>
<dbReference type="InterPro" id="IPR023591">
    <property type="entry name" value="Ribosomal_uS2_flav_dom_sf"/>
</dbReference>
<dbReference type="NCBIfam" id="TIGR01012">
    <property type="entry name" value="uS2_euk_arch"/>
    <property type="match status" value="1"/>
</dbReference>
<dbReference type="PANTHER" id="PTHR11489">
    <property type="entry name" value="40S RIBOSOMAL PROTEIN SA"/>
    <property type="match status" value="1"/>
</dbReference>
<dbReference type="Pfam" id="PF16122">
    <property type="entry name" value="40S_SA_C"/>
    <property type="match status" value="1"/>
</dbReference>
<dbReference type="Pfam" id="PF00318">
    <property type="entry name" value="Ribosomal_S2"/>
    <property type="match status" value="2"/>
</dbReference>
<dbReference type="PRINTS" id="PR00395">
    <property type="entry name" value="RIBOSOMALS2"/>
</dbReference>
<dbReference type="SUPFAM" id="SSF52313">
    <property type="entry name" value="Ribosomal protein S2"/>
    <property type="match status" value="1"/>
</dbReference>
<dbReference type="PROSITE" id="PS00962">
    <property type="entry name" value="RIBOSOMAL_S2_1"/>
    <property type="match status" value="1"/>
</dbReference>
<dbReference type="PROSITE" id="PS00963">
    <property type="entry name" value="RIBOSOMAL_S2_2"/>
    <property type="match status" value="1"/>
</dbReference>
<organism>
    <name type="scientific">Drosophila pseudoobscura pseudoobscura</name>
    <name type="common">Fruit fly</name>
    <dbReference type="NCBI Taxonomy" id="46245"/>
    <lineage>
        <taxon>Eukaryota</taxon>
        <taxon>Metazoa</taxon>
        <taxon>Ecdysozoa</taxon>
        <taxon>Arthropoda</taxon>
        <taxon>Hexapoda</taxon>
        <taxon>Insecta</taxon>
        <taxon>Pterygota</taxon>
        <taxon>Neoptera</taxon>
        <taxon>Endopterygota</taxon>
        <taxon>Diptera</taxon>
        <taxon>Brachycera</taxon>
        <taxon>Muscomorpha</taxon>
        <taxon>Ephydroidea</taxon>
        <taxon>Drosophilidae</taxon>
        <taxon>Drosophila</taxon>
        <taxon>Sophophora</taxon>
    </lineage>
</organism>